<gene>
    <name evidence="1" type="primary">rplF</name>
    <name type="ordered locus">Clim_2214</name>
</gene>
<reference key="1">
    <citation type="submission" date="2008-05" db="EMBL/GenBank/DDBJ databases">
        <title>Complete sequence of Chlorobium limicola DSM 245.</title>
        <authorList>
            <consortium name="US DOE Joint Genome Institute"/>
            <person name="Lucas S."/>
            <person name="Copeland A."/>
            <person name="Lapidus A."/>
            <person name="Glavina del Rio T."/>
            <person name="Dalin E."/>
            <person name="Tice H."/>
            <person name="Bruce D."/>
            <person name="Goodwin L."/>
            <person name="Pitluck S."/>
            <person name="Schmutz J."/>
            <person name="Larimer F."/>
            <person name="Land M."/>
            <person name="Hauser L."/>
            <person name="Kyrpides N."/>
            <person name="Ovchinnikova G."/>
            <person name="Zhao F."/>
            <person name="Li T."/>
            <person name="Liu Z."/>
            <person name="Overmann J."/>
            <person name="Bryant D.A."/>
            <person name="Richardson P."/>
        </authorList>
    </citation>
    <scope>NUCLEOTIDE SEQUENCE [LARGE SCALE GENOMIC DNA]</scope>
    <source>
        <strain>DSM 245 / NBRC 103803 / 6330</strain>
    </source>
</reference>
<comment type="function">
    <text evidence="1">This protein binds to the 23S rRNA, and is important in its secondary structure. It is located near the subunit interface in the base of the L7/L12 stalk, and near the tRNA binding site of the peptidyltransferase center.</text>
</comment>
<comment type="subunit">
    <text evidence="1">Part of the 50S ribosomal subunit.</text>
</comment>
<comment type="similarity">
    <text evidence="1">Belongs to the universal ribosomal protein uL6 family.</text>
</comment>
<sequence length="179" mass="19660">MSRIGKMPISLSNQAKIEISDANVKVTGPKGTLEQALVAQVTLQEENGVVTVQRVDETKKSKAMHGLYRMLISNMVEGVTKGFTRKLEIAGVGYRAELKNDLLALTLGYSHMIYFKAPDSIKIEVPDQTTILISGIDKALVGQVAAKIRSFRKPEPYRGKGIKYEGEVIRRKEGKAAGK</sequence>
<feature type="chain" id="PRO_1000143958" description="Large ribosomal subunit protein uL6">
    <location>
        <begin position="1"/>
        <end position="179"/>
    </location>
</feature>
<proteinExistence type="inferred from homology"/>
<organism>
    <name type="scientific">Chlorobium limicola (strain DSM 245 / NBRC 103803 / 6330)</name>
    <dbReference type="NCBI Taxonomy" id="290315"/>
    <lineage>
        <taxon>Bacteria</taxon>
        <taxon>Pseudomonadati</taxon>
        <taxon>Chlorobiota</taxon>
        <taxon>Chlorobiia</taxon>
        <taxon>Chlorobiales</taxon>
        <taxon>Chlorobiaceae</taxon>
        <taxon>Chlorobium/Pelodictyon group</taxon>
        <taxon>Chlorobium</taxon>
    </lineage>
</organism>
<name>RL6_CHLL2</name>
<dbReference type="EMBL" id="CP001097">
    <property type="protein sequence ID" value="ACD91238.1"/>
    <property type="molecule type" value="Genomic_DNA"/>
</dbReference>
<dbReference type="RefSeq" id="WP_012467105.1">
    <property type="nucleotide sequence ID" value="NC_010803.1"/>
</dbReference>
<dbReference type="SMR" id="B3EGX5"/>
<dbReference type="STRING" id="290315.Clim_2214"/>
<dbReference type="KEGG" id="cli:Clim_2214"/>
<dbReference type="eggNOG" id="COG0097">
    <property type="taxonomic scope" value="Bacteria"/>
</dbReference>
<dbReference type="HOGENOM" id="CLU_065464_1_2_10"/>
<dbReference type="OrthoDB" id="9805007at2"/>
<dbReference type="Proteomes" id="UP000008841">
    <property type="component" value="Chromosome"/>
</dbReference>
<dbReference type="GO" id="GO:0022625">
    <property type="term" value="C:cytosolic large ribosomal subunit"/>
    <property type="evidence" value="ECO:0007669"/>
    <property type="project" value="TreeGrafter"/>
</dbReference>
<dbReference type="GO" id="GO:0019843">
    <property type="term" value="F:rRNA binding"/>
    <property type="evidence" value="ECO:0007669"/>
    <property type="project" value="UniProtKB-UniRule"/>
</dbReference>
<dbReference type="GO" id="GO:0003735">
    <property type="term" value="F:structural constituent of ribosome"/>
    <property type="evidence" value="ECO:0007669"/>
    <property type="project" value="InterPro"/>
</dbReference>
<dbReference type="GO" id="GO:0002181">
    <property type="term" value="P:cytoplasmic translation"/>
    <property type="evidence" value="ECO:0007669"/>
    <property type="project" value="TreeGrafter"/>
</dbReference>
<dbReference type="FunFam" id="3.90.930.12:FF:000001">
    <property type="entry name" value="50S ribosomal protein L6"/>
    <property type="match status" value="1"/>
</dbReference>
<dbReference type="FunFam" id="3.90.930.12:FF:000002">
    <property type="entry name" value="50S ribosomal protein L6"/>
    <property type="match status" value="1"/>
</dbReference>
<dbReference type="Gene3D" id="3.90.930.12">
    <property type="entry name" value="Ribosomal protein L6, alpha-beta domain"/>
    <property type="match status" value="2"/>
</dbReference>
<dbReference type="HAMAP" id="MF_01365_B">
    <property type="entry name" value="Ribosomal_uL6_B"/>
    <property type="match status" value="1"/>
</dbReference>
<dbReference type="InterPro" id="IPR000702">
    <property type="entry name" value="Ribosomal_uL6-like"/>
</dbReference>
<dbReference type="InterPro" id="IPR036789">
    <property type="entry name" value="Ribosomal_uL6-like_a/b-dom_sf"/>
</dbReference>
<dbReference type="InterPro" id="IPR020040">
    <property type="entry name" value="Ribosomal_uL6_a/b-dom"/>
</dbReference>
<dbReference type="InterPro" id="IPR019906">
    <property type="entry name" value="Ribosomal_uL6_bac-type"/>
</dbReference>
<dbReference type="NCBIfam" id="TIGR03654">
    <property type="entry name" value="L6_bact"/>
    <property type="match status" value="1"/>
</dbReference>
<dbReference type="PANTHER" id="PTHR11655">
    <property type="entry name" value="60S/50S RIBOSOMAL PROTEIN L6/L9"/>
    <property type="match status" value="1"/>
</dbReference>
<dbReference type="PANTHER" id="PTHR11655:SF14">
    <property type="entry name" value="LARGE RIBOSOMAL SUBUNIT PROTEIN UL6M"/>
    <property type="match status" value="1"/>
</dbReference>
<dbReference type="Pfam" id="PF00347">
    <property type="entry name" value="Ribosomal_L6"/>
    <property type="match status" value="2"/>
</dbReference>
<dbReference type="PIRSF" id="PIRSF002162">
    <property type="entry name" value="Ribosomal_L6"/>
    <property type="match status" value="1"/>
</dbReference>
<dbReference type="PRINTS" id="PR00059">
    <property type="entry name" value="RIBOSOMALL6"/>
</dbReference>
<dbReference type="SUPFAM" id="SSF56053">
    <property type="entry name" value="Ribosomal protein L6"/>
    <property type="match status" value="2"/>
</dbReference>
<evidence type="ECO:0000255" key="1">
    <source>
        <dbReference type="HAMAP-Rule" id="MF_01365"/>
    </source>
</evidence>
<evidence type="ECO:0000305" key="2"/>
<protein>
    <recommendedName>
        <fullName evidence="1">Large ribosomal subunit protein uL6</fullName>
    </recommendedName>
    <alternativeName>
        <fullName evidence="2">50S ribosomal protein L6</fullName>
    </alternativeName>
</protein>
<accession>B3EGX5</accession>
<keyword id="KW-0687">Ribonucleoprotein</keyword>
<keyword id="KW-0689">Ribosomal protein</keyword>
<keyword id="KW-0694">RNA-binding</keyword>
<keyword id="KW-0699">rRNA-binding</keyword>